<protein>
    <recommendedName>
        <fullName evidence="1">Shikimate kinase</fullName>
        <shortName evidence="1">SK</shortName>
        <ecNumber evidence="1">2.7.1.71</ecNumber>
    </recommendedName>
</protein>
<feature type="chain" id="PRO_0000141578" description="Shikimate kinase">
    <location>
        <begin position="1"/>
        <end position="273"/>
    </location>
</feature>
<feature type="binding site" evidence="1">
    <location>
        <begin position="85"/>
        <end position="95"/>
    </location>
    <ligand>
        <name>ATP</name>
        <dbReference type="ChEBI" id="CHEBI:30616"/>
    </ligand>
</feature>
<proteinExistence type="inferred from homology"/>
<evidence type="ECO:0000255" key="1">
    <source>
        <dbReference type="HAMAP-Rule" id="MF_00370"/>
    </source>
</evidence>
<organism>
    <name type="scientific">Pyrococcus furiosus (strain ATCC 43587 / DSM 3638 / JCM 8422 / Vc1)</name>
    <dbReference type="NCBI Taxonomy" id="186497"/>
    <lineage>
        <taxon>Archaea</taxon>
        <taxon>Methanobacteriati</taxon>
        <taxon>Methanobacteriota</taxon>
        <taxon>Thermococci</taxon>
        <taxon>Thermococcales</taxon>
        <taxon>Thermococcaceae</taxon>
        <taxon>Pyrococcus</taxon>
    </lineage>
</organism>
<keyword id="KW-0028">Amino-acid biosynthesis</keyword>
<keyword id="KW-0057">Aromatic amino acid biosynthesis</keyword>
<keyword id="KW-0067">ATP-binding</keyword>
<keyword id="KW-0963">Cytoplasm</keyword>
<keyword id="KW-0418">Kinase</keyword>
<keyword id="KW-0547">Nucleotide-binding</keyword>
<keyword id="KW-1185">Reference proteome</keyword>
<keyword id="KW-0808">Transferase</keyword>
<dbReference type="EC" id="2.7.1.71" evidence="1"/>
<dbReference type="EMBL" id="AE009950">
    <property type="protein sequence ID" value="AAL81818.1"/>
    <property type="molecule type" value="Genomic_DNA"/>
</dbReference>
<dbReference type="RefSeq" id="WP_011012840.1">
    <property type="nucleotide sequence ID" value="NZ_CP023154.1"/>
</dbReference>
<dbReference type="SMR" id="Q8U0A5"/>
<dbReference type="STRING" id="186497.PF1694"/>
<dbReference type="PaxDb" id="186497-PF1694"/>
<dbReference type="KEGG" id="pfu:PF1694"/>
<dbReference type="PATRIC" id="fig|186497.12.peg.1762"/>
<dbReference type="eggNOG" id="arCOG01025">
    <property type="taxonomic scope" value="Archaea"/>
</dbReference>
<dbReference type="HOGENOM" id="CLU_073768_0_0_2"/>
<dbReference type="OrthoDB" id="9602at2157"/>
<dbReference type="PhylomeDB" id="Q8U0A5"/>
<dbReference type="UniPathway" id="UPA00053">
    <property type="reaction ID" value="UER00088"/>
</dbReference>
<dbReference type="Proteomes" id="UP000001013">
    <property type="component" value="Chromosome"/>
</dbReference>
<dbReference type="GO" id="GO:0005737">
    <property type="term" value="C:cytoplasm"/>
    <property type="evidence" value="ECO:0007669"/>
    <property type="project" value="UniProtKB-SubCell"/>
</dbReference>
<dbReference type="GO" id="GO:0005524">
    <property type="term" value="F:ATP binding"/>
    <property type="evidence" value="ECO:0007669"/>
    <property type="project" value="UniProtKB-UniRule"/>
</dbReference>
<dbReference type="GO" id="GO:0004765">
    <property type="term" value="F:shikimate kinase activity"/>
    <property type="evidence" value="ECO:0007669"/>
    <property type="project" value="UniProtKB-UniRule"/>
</dbReference>
<dbReference type="GO" id="GO:0008652">
    <property type="term" value="P:amino acid biosynthetic process"/>
    <property type="evidence" value="ECO:0007669"/>
    <property type="project" value="UniProtKB-KW"/>
</dbReference>
<dbReference type="GO" id="GO:0009073">
    <property type="term" value="P:aromatic amino acid family biosynthetic process"/>
    <property type="evidence" value="ECO:0007669"/>
    <property type="project" value="UniProtKB-KW"/>
</dbReference>
<dbReference type="GO" id="GO:0009423">
    <property type="term" value="P:chorismate biosynthetic process"/>
    <property type="evidence" value="ECO:0007669"/>
    <property type="project" value="UniProtKB-UniRule"/>
</dbReference>
<dbReference type="Gene3D" id="3.30.230.10">
    <property type="match status" value="1"/>
</dbReference>
<dbReference type="HAMAP" id="MF_00370">
    <property type="entry name" value="Shik_kinase_arch"/>
    <property type="match status" value="1"/>
</dbReference>
<dbReference type="InterPro" id="IPR013750">
    <property type="entry name" value="GHMP_kinase_C_dom"/>
</dbReference>
<dbReference type="InterPro" id="IPR036554">
    <property type="entry name" value="GHMP_kinase_C_sf"/>
</dbReference>
<dbReference type="InterPro" id="IPR006204">
    <property type="entry name" value="GHMP_kinase_N_dom"/>
</dbReference>
<dbReference type="InterPro" id="IPR020568">
    <property type="entry name" value="Ribosomal_Su5_D2-typ_SF"/>
</dbReference>
<dbReference type="InterPro" id="IPR014721">
    <property type="entry name" value="Ribsml_uS5_D2-typ_fold_subgr"/>
</dbReference>
<dbReference type="InterPro" id="IPR010189">
    <property type="entry name" value="SK_arc"/>
</dbReference>
<dbReference type="NCBIfam" id="TIGR01920">
    <property type="entry name" value="Shik_kin_archae"/>
    <property type="match status" value="1"/>
</dbReference>
<dbReference type="PANTHER" id="PTHR20861">
    <property type="entry name" value="HOMOSERINE/4-DIPHOSPHOCYTIDYL-2-C-METHYL-D-ERYTHRITOL KINASE"/>
    <property type="match status" value="1"/>
</dbReference>
<dbReference type="PANTHER" id="PTHR20861:SF3">
    <property type="entry name" value="SHIKIMATE KINASE"/>
    <property type="match status" value="1"/>
</dbReference>
<dbReference type="Pfam" id="PF08544">
    <property type="entry name" value="GHMP_kinases_C"/>
    <property type="match status" value="1"/>
</dbReference>
<dbReference type="Pfam" id="PF00288">
    <property type="entry name" value="GHMP_kinases_N"/>
    <property type="match status" value="1"/>
</dbReference>
<dbReference type="PIRSF" id="PIRSF005758">
    <property type="entry name" value="Shikimt_kin_arch"/>
    <property type="match status" value="1"/>
</dbReference>
<dbReference type="SUPFAM" id="SSF55060">
    <property type="entry name" value="GHMP Kinase, C-terminal domain"/>
    <property type="match status" value="1"/>
</dbReference>
<dbReference type="SUPFAM" id="SSF54211">
    <property type="entry name" value="Ribosomal protein S5 domain 2-like"/>
    <property type="match status" value="1"/>
</dbReference>
<accession>Q8U0A5</accession>
<reference key="1">
    <citation type="journal article" date="1999" name="Genetics">
        <title>Divergence of the hyperthermophilic archaea Pyrococcus furiosus and P. horikoshii inferred from complete genomic sequences.</title>
        <authorList>
            <person name="Maeder D.L."/>
            <person name="Weiss R.B."/>
            <person name="Dunn D.M."/>
            <person name="Cherry J.L."/>
            <person name="Gonzalez J.M."/>
            <person name="DiRuggiero J."/>
            <person name="Robb F.T."/>
        </authorList>
    </citation>
    <scope>NUCLEOTIDE SEQUENCE [LARGE SCALE GENOMIC DNA]</scope>
    <source>
        <strain>ATCC 43587 / DSM 3638 / JCM 8422 / Vc1</strain>
    </source>
</reference>
<comment type="catalytic activity">
    <reaction evidence="1">
        <text>shikimate + ATP = 3-phosphoshikimate + ADP + H(+)</text>
        <dbReference type="Rhea" id="RHEA:13121"/>
        <dbReference type="ChEBI" id="CHEBI:15378"/>
        <dbReference type="ChEBI" id="CHEBI:30616"/>
        <dbReference type="ChEBI" id="CHEBI:36208"/>
        <dbReference type="ChEBI" id="CHEBI:145989"/>
        <dbReference type="ChEBI" id="CHEBI:456216"/>
        <dbReference type="EC" id="2.7.1.71"/>
    </reaction>
</comment>
<comment type="pathway">
    <text evidence="1">Metabolic intermediate biosynthesis; chorismate biosynthesis; chorismate from D-erythrose 4-phosphate and phosphoenolpyruvate: step 5/7.</text>
</comment>
<comment type="subcellular location">
    <subcellularLocation>
        <location evidence="1">Cytoplasm</location>
    </subcellularLocation>
</comment>
<comment type="similarity">
    <text evidence="1">Belongs to the GHMP kinase family. Archaeal shikimate kinase subfamily.</text>
</comment>
<gene>
    <name evidence="1" type="primary">aroK</name>
    <name type="ordered locus">PF1694</name>
</gene>
<name>AROK_PYRFU</name>
<sequence>MRGLGKGSSAITVVNAFATGKGGAIGIDLWTEAKVKITDGEVKGKILVNGLEFNDFRVVNAVLDVMRRYSGIEFGIEFEINSEIPVGKGLKSSSAVANALVEAIARALRLNIPGIKVVKLGVEAAKKAGVTLTGAFDDACASYFGGLCLTDNLRVELLKRIEIDELPVVILVPNETVLTEELKGVDFLKIAPYVEEAFKLAIKGEWKKALVLNGLIYSTFLSYPPEPISKALHLGAVVGLSGKGPSVFAITDEPERIEEVWREFGDVIITSTR</sequence>